<name>IOJAP_ARATH</name>
<sequence length="238" mass="26378">MASSTGLTVAGALLAGDFRLPAVSSLIPRKTSSSLSCLSNRDLSSPYNCCWRLSRGKILTSLSNSRKFAVGKEAEDGFLSNVSEDTDEMFDDLFNKYGKVVFRSTDVKSPTAEVDDDAESLAFAVELAKVASDVKAGDIKVLFVKPLVYWTRFFIIATAFSRPQIDAIGSRMRDLAEKKYGKVANGDVKPNSWTLLDFGDVVIHLFLPPQRTFYNLEDFYGNAMQIELPFEDQSQPRN</sequence>
<dbReference type="EMBL" id="AB026645">
    <property type="protein sequence ID" value="BAB02500.1"/>
    <property type="molecule type" value="Genomic_DNA"/>
</dbReference>
<dbReference type="EMBL" id="CP002686">
    <property type="protein sequence ID" value="AEE75263.1"/>
    <property type="molecule type" value="Genomic_DNA"/>
</dbReference>
<dbReference type="EMBL" id="AY139986">
    <property type="protein sequence ID" value="AAM98129.1"/>
    <property type="molecule type" value="mRNA"/>
</dbReference>
<dbReference type="EMBL" id="BT002591">
    <property type="protein sequence ID" value="AAO00951.1"/>
    <property type="molecule type" value="mRNA"/>
</dbReference>
<dbReference type="EMBL" id="AY087920">
    <property type="protein sequence ID" value="AAM65470.1"/>
    <property type="molecule type" value="mRNA"/>
</dbReference>
<dbReference type="RefSeq" id="NP_566439.1">
    <property type="nucleotide sequence ID" value="NM_112129.2"/>
</dbReference>
<dbReference type="SMR" id="Q9LDY9"/>
<dbReference type="BioGRID" id="5812">
    <property type="interactions" value="6"/>
</dbReference>
<dbReference type="FunCoup" id="Q9LDY9">
    <property type="interactions" value="824"/>
</dbReference>
<dbReference type="IntAct" id="Q9LDY9">
    <property type="interactions" value="6"/>
</dbReference>
<dbReference type="STRING" id="3702.Q9LDY9"/>
<dbReference type="iPTMnet" id="Q9LDY9"/>
<dbReference type="PaxDb" id="3702-AT3G12930.1"/>
<dbReference type="ProteomicsDB" id="247180"/>
<dbReference type="EnsemblPlants" id="AT3G12930.1">
    <property type="protein sequence ID" value="AT3G12930.1"/>
    <property type="gene ID" value="AT3G12930"/>
</dbReference>
<dbReference type="GeneID" id="820478"/>
<dbReference type="Gramene" id="AT3G12930.1">
    <property type="protein sequence ID" value="AT3G12930.1"/>
    <property type="gene ID" value="AT3G12930"/>
</dbReference>
<dbReference type="KEGG" id="ath:AT3G12930"/>
<dbReference type="Araport" id="AT3G12930"/>
<dbReference type="TAIR" id="AT3G12930">
    <property type="gene designation" value="DG238"/>
</dbReference>
<dbReference type="eggNOG" id="ENOG502RY19">
    <property type="taxonomic scope" value="Eukaryota"/>
</dbReference>
<dbReference type="HOGENOM" id="CLU_078387_0_0_1"/>
<dbReference type="InParanoid" id="Q9LDY9"/>
<dbReference type="OMA" id="YKPNSWT"/>
<dbReference type="PhylomeDB" id="Q9LDY9"/>
<dbReference type="PRO" id="PR:Q9LDY9"/>
<dbReference type="Proteomes" id="UP000006548">
    <property type="component" value="Chromosome 3"/>
</dbReference>
<dbReference type="ExpressionAtlas" id="Q9LDY9">
    <property type="expression patterns" value="baseline and differential"/>
</dbReference>
<dbReference type="GO" id="GO:0009507">
    <property type="term" value="C:chloroplast"/>
    <property type="evidence" value="ECO:0007005"/>
    <property type="project" value="TAIR"/>
</dbReference>
<dbReference type="GO" id="GO:0042644">
    <property type="term" value="C:chloroplast nucleoid"/>
    <property type="evidence" value="ECO:0000314"/>
    <property type="project" value="TAIR"/>
</dbReference>
<dbReference type="GO" id="GO:0000427">
    <property type="term" value="C:plastid-encoded plastid RNA polymerase complex"/>
    <property type="evidence" value="ECO:0000353"/>
    <property type="project" value="TAIR"/>
</dbReference>
<dbReference type="FunFam" id="3.30.460.10:FF:000026">
    <property type="entry name" value="Protein Iojap, chloroplastic"/>
    <property type="match status" value="1"/>
</dbReference>
<dbReference type="Gene3D" id="3.30.460.10">
    <property type="entry name" value="Beta Polymerase, domain 2"/>
    <property type="match status" value="1"/>
</dbReference>
<dbReference type="HAMAP" id="MF_01477">
    <property type="entry name" value="Iojap_RsfS"/>
    <property type="match status" value="1"/>
</dbReference>
<dbReference type="InterPro" id="IPR004394">
    <property type="entry name" value="Iojap/RsfS/C7orf30"/>
</dbReference>
<dbReference type="InterPro" id="IPR043519">
    <property type="entry name" value="NT_sf"/>
</dbReference>
<dbReference type="NCBIfam" id="TIGR00090">
    <property type="entry name" value="rsfS_iojap_ybeB"/>
    <property type="match status" value="1"/>
</dbReference>
<dbReference type="PANTHER" id="PTHR21043">
    <property type="entry name" value="IOJAP SUPERFAMILY ORTHOLOG"/>
    <property type="match status" value="1"/>
</dbReference>
<dbReference type="PANTHER" id="PTHR21043:SF2">
    <property type="entry name" value="PROTEIN IOJAP, CHLOROPLASTIC"/>
    <property type="match status" value="1"/>
</dbReference>
<dbReference type="Pfam" id="PF02410">
    <property type="entry name" value="RsfS"/>
    <property type="match status" value="1"/>
</dbReference>
<dbReference type="SUPFAM" id="SSF81301">
    <property type="entry name" value="Nucleotidyltransferase"/>
    <property type="match status" value="1"/>
</dbReference>
<keyword id="KW-0150">Chloroplast</keyword>
<keyword id="KW-0934">Plastid</keyword>
<keyword id="KW-1185">Reference proteome</keyword>
<keyword id="KW-0809">Transit peptide</keyword>
<reference key="1">
    <citation type="journal article" date="2000" name="DNA Res.">
        <title>Structural analysis of Arabidopsis thaliana chromosome 3. I. Sequence features of the regions of 4,504,864 bp covered by sixty P1 and TAC clones.</title>
        <authorList>
            <person name="Sato S."/>
            <person name="Nakamura Y."/>
            <person name="Kaneko T."/>
            <person name="Katoh T."/>
            <person name="Asamizu E."/>
            <person name="Tabata S."/>
        </authorList>
    </citation>
    <scope>NUCLEOTIDE SEQUENCE [LARGE SCALE GENOMIC DNA]</scope>
    <source>
        <strain>cv. Columbia</strain>
    </source>
</reference>
<reference key="2">
    <citation type="journal article" date="2017" name="Plant J.">
        <title>Araport11: a complete reannotation of the Arabidopsis thaliana reference genome.</title>
        <authorList>
            <person name="Cheng C.Y."/>
            <person name="Krishnakumar V."/>
            <person name="Chan A.P."/>
            <person name="Thibaud-Nissen F."/>
            <person name="Schobel S."/>
            <person name="Town C.D."/>
        </authorList>
    </citation>
    <scope>GENOME REANNOTATION</scope>
    <source>
        <strain>cv. Columbia</strain>
    </source>
</reference>
<reference key="3">
    <citation type="journal article" date="2003" name="Science">
        <title>Empirical analysis of transcriptional activity in the Arabidopsis genome.</title>
        <authorList>
            <person name="Yamada K."/>
            <person name="Lim J."/>
            <person name="Dale J.M."/>
            <person name="Chen H."/>
            <person name="Shinn P."/>
            <person name="Palm C.J."/>
            <person name="Southwick A.M."/>
            <person name="Wu H.C."/>
            <person name="Kim C.J."/>
            <person name="Nguyen M."/>
            <person name="Pham P.K."/>
            <person name="Cheuk R.F."/>
            <person name="Karlin-Newmann G."/>
            <person name="Liu S.X."/>
            <person name="Lam B."/>
            <person name="Sakano H."/>
            <person name="Wu T."/>
            <person name="Yu G."/>
            <person name="Miranda M."/>
            <person name="Quach H.L."/>
            <person name="Tripp M."/>
            <person name="Chang C.H."/>
            <person name="Lee J.M."/>
            <person name="Toriumi M.J."/>
            <person name="Chan M.M."/>
            <person name="Tang C.C."/>
            <person name="Onodera C.S."/>
            <person name="Deng J.M."/>
            <person name="Akiyama K."/>
            <person name="Ansari Y."/>
            <person name="Arakawa T."/>
            <person name="Banh J."/>
            <person name="Banno F."/>
            <person name="Bowser L."/>
            <person name="Brooks S.Y."/>
            <person name="Carninci P."/>
            <person name="Chao Q."/>
            <person name="Choy N."/>
            <person name="Enju A."/>
            <person name="Goldsmith A.D."/>
            <person name="Gurjal M."/>
            <person name="Hansen N.F."/>
            <person name="Hayashizaki Y."/>
            <person name="Johnson-Hopson C."/>
            <person name="Hsuan V.W."/>
            <person name="Iida K."/>
            <person name="Karnes M."/>
            <person name="Khan S."/>
            <person name="Koesema E."/>
            <person name="Ishida J."/>
            <person name="Jiang P.X."/>
            <person name="Jones T."/>
            <person name="Kawai J."/>
            <person name="Kamiya A."/>
            <person name="Meyers C."/>
            <person name="Nakajima M."/>
            <person name="Narusaka M."/>
            <person name="Seki M."/>
            <person name="Sakurai T."/>
            <person name="Satou M."/>
            <person name="Tamse R."/>
            <person name="Vaysberg M."/>
            <person name="Wallender E.K."/>
            <person name="Wong C."/>
            <person name="Yamamura Y."/>
            <person name="Yuan S."/>
            <person name="Shinozaki K."/>
            <person name="Davis R.W."/>
            <person name="Theologis A."/>
            <person name="Ecker J.R."/>
        </authorList>
    </citation>
    <scope>NUCLEOTIDE SEQUENCE [LARGE SCALE MRNA]</scope>
    <source>
        <strain>cv. Columbia</strain>
    </source>
</reference>
<reference key="4">
    <citation type="submission" date="2002-03" db="EMBL/GenBank/DDBJ databases">
        <title>Full-length cDNA from Arabidopsis thaliana.</title>
        <authorList>
            <person name="Brover V.V."/>
            <person name="Troukhan M.E."/>
            <person name="Alexandrov N.A."/>
            <person name="Lu Y.-P."/>
            <person name="Flavell R.B."/>
            <person name="Feldmann K.A."/>
        </authorList>
    </citation>
    <scope>NUCLEOTIDE SEQUENCE [LARGE SCALE MRNA]</scope>
</reference>
<gene>
    <name type="primary">IJ</name>
    <name type="ordered locus">At3g12930</name>
    <name type="ORF">MGH6.5</name>
</gene>
<comment type="function">
    <text evidence="1 3">May be a ribosome silencing factor (Potential). Involved in plastid biogenesis.</text>
</comment>
<comment type="subunit">
    <text evidence="1">Interacts with chloroplast ribosomal protein uL14c (rpl14).</text>
</comment>
<comment type="subcellular location">
    <subcellularLocation>
        <location evidence="2">Plastid</location>
        <location evidence="2">Chloroplast</location>
    </subcellularLocation>
</comment>
<comment type="similarity">
    <text evidence="3">Belongs to the Iojap/RsfS family.</text>
</comment>
<proteinExistence type="evidence at transcript level"/>
<feature type="transit peptide" description="Chloroplast" evidence="2">
    <location>
        <begin position="1"/>
        <end position="66"/>
    </location>
</feature>
<feature type="chain" id="PRO_0000419744" description="Protein Iojap, chloroplastic">
    <location>
        <begin position="67"/>
        <end position="238"/>
    </location>
</feature>
<feature type="sequence conflict" description="In Ref. 4; AAM65470." evidence="3" ref="4">
    <original>A</original>
    <variation>S</variation>
    <location>
        <position position="15"/>
    </location>
</feature>
<feature type="sequence conflict" description="In Ref. 4; AAM65470." evidence="3" ref="4">
    <original>VS</original>
    <variation>IL</variation>
    <location>
        <begin position="23"/>
        <end position="24"/>
    </location>
</feature>
<accession>Q9LDY9</accession>
<accession>Q8LAC1</accession>
<organism>
    <name type="scientific">Arabidopsis thaliana</name>
    <name type="common">Mouse-ear cress</name>
    <dbReference type="NCBI Taxonomy" id="3702"/>
    <lineage>
        <taxon>Eukaryota</taxon>
        <taxon>Viridiplantae</taxon>
        <taxon>Streptophyta</taxon>
        <taxon>Embryophyta</taxon>
        <taxon>Tracheophyta</taxon>
        <taxon>Spermatophyta</taxon>
        <taxon>Magnoliopsida</taxon>
        <taxon>eudicotyledons</taxon>
        <taxon>Gunneridae</taxon>
        <taxon>Pentapetalae</taxon>
        <taxon>rosids</taxon>
        <taxon>malvids</taxon>
        <taxon>Brassicales</taxon>
        <taxon>Brassicaceae</taxon>
        <taxon>Camelineae</taxon>
        <taxon>Arabidopsis</taxon>
    </lineage>
</organism>
<protein>
    <recommendedName>
        <fullName>Protein Iojap, chloroplastic</fullName>
    </recommendedName>
</protein>
<evidence type="ECO:0000250" key="1">
    <source>
        <dbReference type="UniProtKB" id="Q41822"/>
    </source>
</evidence>
<evidence type="ECO:0000255" key="2"/>
<evidence type="ECO:0000305" key="3"/>